<name>PUR5_ALIF1</name>
<organism>
    <name type="scientific">Aliivibrio fischeri (strain ATCC 700601 / ES114)</name>
    <name type="common">Vibrio fischeri</name>
    <dbReference type="NCBI Taxonomy" id="312309"/>
    <lineage>
        <taxon>Bacteria</taxon>
        <taxon>Pseudomonadati</taxon>
        <taxon>Pseudomonadota</taxon>
        <taxon>Gammaproteobacteria</taxon>
        <taxon>Vibrionales</taxon>
        <taxon>Vibrionaceae</taxon>
        <taxon>Aliivibrio</taxon>
    </lineage>
</organism>
<dbReference type="EC" id="6.3.3.1" evidence="1"/>
<dbReference type="EMBL" id="CP000020">
    <property type="protein sequence ID" value="AAW86423.1"/>
    <property type="molecule type" value="Genomic_DNA"/>
</dbReference>
<dbReference type="RefSeq" id="WP_011262407.1">
    <property type="nucleotide sequence ID" value="NC_006840.2"/>
</dbReference>
<dbReference type="RefSeq" id="YP_205311.1">
    <property type="nucleotide sequence ID" value="NC_006840.2"/>
</dbReference>
<dbReference type="SMR" id="Q5E3H3"/>
<dbReference type="STRING" id="312309.VF_1928"/>
<dbReference type="EnsemblBacteria" id="AAW86423">
    <property type="protein sequence ID" value="AAW86423"/>
    <property type="gene ID" value="VF_1928"/>
</dbReference>
<dbReference type="GeneID" id="54164626"/>
<dbReference type="KEGG" id="vfi:VF_1928"/>
<dbReference type="PATRIC" id="fig|312309.11.peg.1956"/>
<dbReference type="eggNOG" id="COG0150">
    <property type="taxonomic scope" value="Bacteria"/>
</dbReference>
<dbReference type="HOGENOM" id="CLU_047116_0_0_6"/>
<dbReference type="OrthoDB" id="9777881at2"/>
<dbReference type="UniPathway" id="UPA00074">
    <property type="reaction ID" value="UER00129"/>
</dbReference>
<dbReference type="Proteomes" id="UP000000537">
    <property type="component" value="Chromosome I"/>
</dbReference>
<dbReference type="GO" id="GO:0005829">
    <property type="term" value="C:cytosol"/>
    <property type="evidence" value="ECO:0007669"/>
    <property type="project" value="TreeGrafter"/>
</dbReference>
<dbReference type="GO" id="GO:0005524">
    <property type="term" value="F:ATP binding"/>
    <property type="evidence" value="ECO:0007669"/>
    <property type="project" value="UniProtKB-KW"/>
</dbReference>
<dbReference type="GO" id="GO:0004637">
    <property type="term" value="F:phosphoribosylamine-glycine ligase activity"/>
    <property type="evidence" value="ECO:0007669"/>
    <property type="project" value="TreeGrafter"/>
</dbReference>
<dbReference type="GO" id="GO:0004641">
    <property type="term" value="F:phosphoribosylformylglycinamidine cyclo-ligase activity"/>
    <property type="evidence" value="ECO:0007669"/>
    <property type="project" value="UniProtKB-UniRule"/>
</dbReference>
<dbReference type="GO" id="GO:0006189">
    <property type="term" value="P:'de novo' IMP biosynthetic process"/>
    <property type="evidence" value="ECO:0007669"/>
    <property type="project" value="UniProtKB-UniRule"/>
</dbReference>
<dbReference type="GO" id="GO:0046084">
    <property type="term" value="P:adenine biosynthetic process"/>
    <property type="evidence" value="ECO:0007669"/>
    <property type="project" value="TreeGrafter"/>
</dbReference>
<dbReference type="CDD" id="cd02196">
    <property type="entry name" value="PurM"/>
    <property type="match status" value="1"/>
</dbReference>
<dbReference type="FunFam" id="3.30.1330.10:FF:000001">
    <property type="entry name" value="Phosphoribosylformylglycinamidine cyclo-ligase"/>
    <property type="match status" value="1"/>
</dbReference>
<dbReference type="FunFam" id="3.90.650.10:FF:000001">
    <property type="entry name" value="Phosphoribosylformylglycinamidine cyclo-ligase"/>
    <property type="match status" value="1"/>
</dbReference>
<dbReference type="Gene3D" id="3.90.650.10">
    <property type="entry name" value="PurM-like C-terminal domain"/>
    <property type="match status" value="1"/>
</dbReference>
<dbReference type="Gene3D" id="3.30.1330.10">
    <property type="entry name" value="PurM-like, N-terminal domain"/>
    <property type="match status" value="1"/>
</dbReference>
<dbReference type="HAMAP" id="MF_00741">
    <property type="entry name" value="AIRS"/>
    <property type="match status" value="1"/>
</dbReference>
<dbReference type="InterPro" id="IPR010918">
    <property type="entry name" value="PurM-like_C_dom"/>
</dbReference>
<dbReference type="InterPro" id="IPR036676">
    <property type="entry name" value="PurM-like_C_sf"/>
</dbReference>
<dbReference type="InterPro" id="IPR016188">
    <property type="entry name" value="PurM-like_N"/>
</dbReference>
<dbReference type="InterPro" id="IPR036921">
    <property type="entry name" value="PurM-like_N_sf"/>
</dbReference>
<dbReference type="InterPro" id="IPR004733">
    <property type="entry name" value="PurM_cligase"/>
</dbReference>
<dbReference type="NCBIfam" id="TIGR00878">
    <property type="entry name" value="purM"/>
    <property type="match status" value="1"/>
</dbReference>
<dbReference type="PANTHER" id="PTHR10520:SF12">
    <property type="entry name" value="TRIFUNCTIONAL PURINE BIOSYNTHETIC PROTEIN ADENOSINE-3"/>
    <property type="match status" value="1"/>
</dbReference>
<dbReference type="PANTHER" id="PTHR10520">
    <property type="entry name" value="TRIFUNCTIONAL PURINE BIOSYNTHETIC PROTEIN ADENOSINE-3-RELATED"/>
    <property type="match status" value="1"/>
</dbReference>
<dbReference type="Pfam" id="PF00586">
    <property type="entry name" value="AIRS"/>
    <property type="match status" value="1"/>
</dbReference>
<dbReference type="Pfam" id="PF02769">
    <property type="entry name" value="AIRS_C"/>
    <property type="match status" value="1"/>
</dbReference>
<dbReference type="SUPFAM" id="SSF56042">
    <property type="entry name" value="PurM C-terminal domain-like"/>
    <property type="match status" value="1"/>
</dbReference>
<dbReference type="SUPFAM" id="SSF55326">
    <property type="entry name" value="PurM N-terminal domain-like"/>
    <property type="match status" value="1"/>
</dbReference>
<keyword id="KW-0067">ATP-binding</keyword>
<keyword id="KW-0963">Cytoplasm</keyword>
<keyword id="KW-0436">Ligase</keyword>
<keyword id="KW-0547">Nucleotide-binding</keyword>
<keyword id="KW-0658">Purine biosynthesis</keyword>
<keyword id="KW-1185">Reference proteome</keyword>
<evidence type="ECO:0000255" key="1">
    <source>
        <dbReference type="HAMAP-Rule" id="MF_00741"/>
    </source>
</evidence>
<proteinExistence type="inferred from homology"/>
<protein>
    <recommendedName>
        <fullName evidence="1">Phosphoribosylformylglycinamidine cyclo-ligase</fullName>
        <ecNumber evidence="1">6.3.3.1</ecNumber>
    </recommendedName>
    <alternativeName>
        <fullName evidence="1">AIR synthase</fullName>
    </alternativeName>
    <alternativeName>
        <fullName evidence="1">AIRS</fullName>
    </alternativeName>
    <alternativeName>
        <fullName evidence="1">Phosphoribosyl-aminoimidazole synthetase</fullName>
    </alternativeName>
</protein>
<sequence length="346" mass="36880">MSDNKTSLSYKDAGVDIDAGNALVDRIKGVVKRTRRPEVMGGIGGFGALCELPTKYKQPLLVSGTDGVGTKLRLALDLNKHDTIGIDLVAMCVNDLIVQGAEPLFFLDYYATGKLDVDVAAEVVTGIGEGCIQAGCALIGGETAEMPGMYEGEDYDVAGFCVGVVEKEDVIDGTKVAAGDALIAVGSSGPHSNGYSLIRKILEVSNADLNEELNGKTIAAHLIEPTKIYIKSALKMIAEHDIHAISHITGGGFWENIPRVLPQGTKAVVDGSSWEWPAIFNWLQEKGNVDTYEMYRTFNCGVGLVVALPKEQAEQAVALLNAEGENAWVIGEIAAAEQGEEQVEIR</sequence>
<reference key="1">
    <citation type="journal article" date="2005" name="Proc. Natl. Acad. Sci. U.S.A.">
        <title>Complete genome sequence of Vibrio fischeri: a symbiotic bacterium with pathogenic congeners.</title>
        <authorList>
            <person name="Ruby E.G."/>
            <person name="Urbanowski M."/>
            <person name="Campbell J."/>
            <person name="Dunn A."/>
            <person name="Faini M."/>
            <person name="Gunsalus R."/>
            <person name="Lostroh P."/>
            <person name="Lupp C."/>
            <person name="McCann J."/>
            <person name="Millikan D."/>
            <person name="Schaefer A."/>
            <person name="Stabb E."/>
            <person name="Stevens A."/>
            <person name="Visick K."/>
            <person name="Whistler C."/>
            <person name="Greenberg E.P."/>
        </authorList>
    </citation>
    <scope>NUCLEOTIDE SEQUENCE [LARGE SCALE GENOMIC DNA]</scope>
    <source>
        <strain>ATCC 700601 / ES114</strain>
    </source>
</reference>
<feature type="chain" id="PRO_0000258428" description="Phosphoribosylformylglycinamidine cyclo-ligase">
    <location>
        <begin position="1"/>
        <end position="346"/>
    </location>
</feature>
<gene>
    <name evidence="1" type="primary">purM</name>
    <name type="ordered locus">VF_1928</name>
</gene>
<accession>Q5E3H3</accession>
<comment type="catalytic activity">
    <reaction evidence="1">
        <text>2-formamido-N(1)-(5-O-phospho-beta-D-ribosyl)acetamidine + ATP = 5-amino-1-(5-phospho-beta-D-ribosyl)imidazole + ADP + phosphate + H(+)</text>
        <dbReference type="Rhea" id="RHEA:23032"/>
        <dbReference type="ChEBI" id="CHEBI:15378"/>
        <dbReference type="ChEBI" id="CHEBI:30616"/>
        <dbReference type="ChEBI" id="CHEBI:43474"/>
        <dbReference type="ChEBI" id="CHEBI:137981"/>
        <dbReference type="ChEBI" id="CHEBI:147287"/>
        <dbReference type="ChEBI" id="CHEBI:456216"/>
        <dbReference type="EC" id="6.3.3.1"/>
    </reaction>
</comment>
<comment type="pathway">
    <text evidence="1">Purine metabolism; IMP biosynthesis via de novo pathway; 5-amino-1-(5-phospho-D-ribosyl)imidazole from N(2)-formyl-N(1)-(5-phospho-D-ribosyl)glycinamide: step 2/2.</text>
</comment>
<comment type="subcellular location">
    <subcellularLocation>
        <location evidence="1">Cytoplasm</location>
    </subcellularLocation>
</comment>
<comment type="similarity">
    <text evidence="1">Belongs to the AIR synthase family.</text>
</comment>